<keyword id="KW-0227">DNA damage</keyword>
<keyword id="KW-0233">DNA recombination</keyword>
<keyword id="KW-0234">DNA repair</keyword>
<keyword id="KW-0378">Hydrolase</keyword>
<keyword id="KW-0449">Lipoprotein</keyword>
<keyword id="KW-0460">Magnesium</keyword>
<keyword id="KW-0540">Nuclease</keyword>
<keyword id="KW-0564">Palmitate</keyword>
<keyword id="KW-0597">Phosphoprotein</keyword>
<keyword id="KW-1185">Reference proteome</keyword>
<comment type="function">
    <text evidence="1">Plays a role in DNA replication by cleaving viral DNA concatamers to yield unit-length viral genomes. The concatamer junctions contain inverted repeat sequences that can be extruded as cruciforms, yielding Holliday junctions that A22 protein cleaves.</text>
</comment>
<comment type="cofactor">
    <cofactor evidence="1">
        <name>Mg(2+)</name>
        <dbReference type="ChEBI" id="CHEBI:18420"/>
    </cofactor>
    <text evidence="1">Binds 1 Mg(2+) ion per subunit.</text>
</comment>
<comment type="similarity">
    <text evidence="2">Belongs to the RuvC family. Poxviruses-type subfamily.</text>
</comment>
<accession>P0DOS5</accession>
<accession>P33845</accession>
<sequence length="187" mass="21995">METLTSSSQSLISSPMSKKDYSSEIICAFDIGAKNPARTVLEVKDNSVRVLDISKLDWSSDWERRIAKDLSQYEYTTVLLERQPRRSPYVKFIYFIKGFLYHTSATKVICVSPVMSGNSYRDRKKRSVEAFFDWMDIFGLRDSVPDRRKLDDVADSFNLAMRYVLDKWNTNYTHYNRCKSRNYIKKM</sequence>
<feature type="chain" id="PRO_0000183158" description="Resolvase OPG149">
    <location>
        <begin position="1"/>
        <end position="187"/>
    </location>
</feature>
<organism>
    <name type="scientific">Variola virus (isolate Human/India/Ind3/1967)</name>
    <name type="common">VARV</name>
    <name type="synonym">Smallpox virus</name>
    <dbReference type="NCBI Taxonomy" id="587200"/>
    <lineage>
        <taxon>Viruses</taxon>
        <taxon>Varidnaviria</taxon>
        <taxon>Bamfordvirae</taxon>
        <taxon>Nucleocytoviricota</taxon>
        <taxon>Pokkesviricetes</taxon>
        <taxon>Chitovirales</taxon>
        <taxon>Poxviridae</taxon>
        <taxon>Chordopoxvirinae</taxon>
        <taxon>Orthopoxvirus</taxon>
        <taxon>Variola virus</taxon>
    </lineage>
</organism>
<organismHost>
    <name type="scientific">Homo sapiens</name>
    <name type="common">Human</name>
    <dbReference type="NCBI Taxonomy" id="9606"/>
</organismHost>
<reference key="1">
    <citation type="journal article" date="1993" name="FEBS Lett.">
        <title>Genes of variola and vaccinia viruses necessary to overcome the host protective mechanisms.</title>
        <authorList>
            <person name="Shchelkunov S.N."/>
            <person name="Blinov V.M."/>
            <person name="Sandakhchiev L.S."/>
        </authorList>
    </citation>
    <scope>NUCLEOTIDE SEQUENCE [GENOMIC DNA]</scope>
</reference>
<proteinExistence type="inferred from homology"/>
<gene>
    <name type="primary">OPG149</name>
    <name type="ORF">A22R</name>
    <name type="ORF">A23R</name>
</gene>
<evidence type="ECO:0000250" key="1">
    <source>
        <dbReference type="UniProtKB" id="Q80HV3"/>
    </source>
</evidence>
<evidence type="ECO:0000305" key="2"/>
<protein>
    <recommendedName>
        <fullName>Resolvase OPG149</fullName>
        <ecNumber>3.1.-.-</ecNumber>
    </recommendedName>
</protein>
<dbReference type="EC" id="3.1.-.-"/>
<dbReference type="EMBL" id="X69198">
    <property type="protein sequence ID" value="CAA49067.1"/>
    <property type="molecule type" value="Genomic_DNA"/>
</dbReference>
<dbReference type="PIR" id="E36850">
    <property type="entry name" value="E36850"/>
</dbReference>
<dbReference type="RefSeq" id="NP_042170.1">
    <property type="nucleotide sequence ID" value="NC_001611.1"/>
</dbReference>
<dbReference type="SMR" id="P0DOS5"/>
<dbReference type="GeneID" id="1486498"/>
<dbReference type="KEGG" id="vg:1486498"/>
<dbReference type="Proteomes" id="UP000002060">
    <property type="component" value="Segment"/>
</dbReference>
<dbReference type="GO" id="GO:0000400">
    <property type="term" value="F:four-way junction DNA binding"/>
    <property type="evidence" value="ECO:0007669"/>
    <property type="project" value="InterPro"/>
</dbReference>
<dbReference type="GO" id="GO:0000287">
    <property type="term" value="F:magnesium ion binding"/>
    <property type="evidence" value="ECO:0007669"/>
    <property type="project" value="InterPro"/>
</dbReference>
<dbReference type="GO" id="GO:0004518">
    <property type="term" value="F:nuclease activity"/>
    <property type="evidence" value="ECO:0007669"/>
    <property type="project" value="UniProtKB-KW"/>
</dbReference>
<dbReference type="GO" id="GO:0006310">
    <property type="term" value="P:DNA recombination"/>
    <property type="evidence" value="ECO:0007669"/>
    <property type="project" value="UniProtKB-KW"/>
</dbReference>
<dbReference type="GO" id="GO:0006281">
    <property type="term" value="P:DNA repair"/>
    <property type="evidence" value="ECO:0007669"/>
    <property type="project" value="UniProtKB-KW"/>
</dbReference>
<dbReference type="InterPro" id="IPR006932">
    <property type="entry name" value="HJ-resolvase_A22"/>
</dbReference>
<dbReference type="InterPro" id="IPR012337">
    <property type="entry name" value="RNaseH-like_sf"/>
</dbReference>
<dbReference type="Pfam" id="PF04848">
    <property type="entry name" value="Pox_A22"/>
    <property type="match status" value="1"/>
</dbReference>
<dbReference type="SUPFAM" id="SSF53098">
    <property type="entry name" value="Ribonuclease H-like"/>
    <property type="match status" value="1"/>
</dbReference>
<name>RUVV_VAR67</name>